<evidence type="ECO:0000250" key="1"/>
<evidence type="ECO:0000255" key="2"/>
<evidence type="ECO:0000255" key="3">
    <source>
        <dbReference type="PROSITE-ProRule" id="PRU00625"/>
    </source>
</evidence>
<evidence type="ECO:0000255" key="4">
    <source>
        <dbReference type="PROSITE-ProRule" id="PRU00837"/>
    </source>
</evidence>
<evidence type="ECO:0000256" key="5">
    <source>
        <dbReference type="SAM" id="MobiDB-lite"/>
    </source>
</evidence>
<evidence type="ECO:0000305" key="6"/>
<organism>
    <name type="scientific">Zea mays</name>
    <name type="common">Maize</name>
    <dbReference type="NCBI Taxonomy" id="4577"/>
    <lineage>
        <taxon>Eukaryota</taxon>
        <taxon>Viridiplantae</taxon>
        <taxon>Streptophyta</taxon>
        <taxon>Embryophyta</taxon>
        <taxon>Tracheophyta</taxon>
        <taxon>Spermatophyta</taxon>
        <taxon>Magnoliopsida</taxon>
        <taxon>Liliopsida</taxon>
        <taxon>Poales</taxon>
        <taxon>Poaceae</taxon>
        <taxon>PACMAD clade</taxon>
        <taxon>Panicoideae</taxon>
        <taxon>Andropogonodae</taxon>
        <taxon>Andropogoneae</taxon>
        <taxon>Tripsacinae</taxon>
        <taxon>Zea</taxon>
    </lineage>
</organism>
<gene>
    <name type="primary">SMH3</name>
    <name type="ORF">ZEAMMB73_537819</name>
</gene>
<protein>
    <recommendedName>
        <fullName>Single myb histone 3</fullName>
    </recommendedName>
    <alternativeName>
        <fullName>Protein SINGLE MYB HISTONE3</fullName>
    </alternativeName>
</protein>
<feature type="chain" id="PRO_0000429015" description="Single myb histone 3">
    <location>
        <begin position="1"/>
        <end position="285"/>
    </location>
</feature>
<feature type="domain" description="HTH myb-type" evidence="3">
    <location>
        <begin position="1"/>
        <end position="60"/>
    </location>
</feature>
<feature type="domain" description="H15" evidence="4">
    <location>
        <begin position="113"/>
        <end position="181"/>
    </location>
</feature>
<feature type="DNA-binding region" description="H-T-H motif" evidence="3">
    <location>
        <begin position="28"/>
        <end position="56"/>
    </location>
</feature>
<feature type="region of interest" description="Disordered" evidence="5">
    <location>
        <begin position="1"/>
        <end position="35"/>
    </location>
</feature>
<feature type="coiled-coil region" evidence="2">
    <location>
        <begin position="226"/>
        <end position="255"/>
    </location>
</feature>
<keyword id="KW-0158">Chromosome</keyword>
<keyword id="KW-0175">Coiled coil</keyword>
<keyword id="KW-0238">DNA-binding</keyword>
<keyword id="KW-0539">Nucleus</keyword>
<keyword id="KW-1185">Reference proteome</keyword>
<keyword id="KW-0779">Telomere</keyword>
<keyword id="KW-0804">Transcription</keyword>
<keyword id="KW-0805">Transcription regulation</keyword>
<proteinExistence type="evidence at transcript level"/>
<dbReference type="EMBL" id="AY280629">
    <property type="protein sequence ID" value="AAQ62066.1"/>
    <property type="molecule type" value="mRNA"/>
</dbReference>
<dbReference type="EMBL" id="CM000784">
    <property type="protein sequence ID" value="AFW83707.1"/>
    <property type="molecule type" value="Genomic_DNA"/>
</dbReference>
<dbReference type="EMBL" id="EU962838">
    <property type="protein sequence ID" value="ACG34956.1"/>
    <property type="molecule type" value="mRNA"/>
</dbReference>
<dbReference type="EMBL" id="BT053836">
    <property type="protein sequence ID" value="ACL52443.1"/>
    <property type="molecule type" value="mRNA"/>
</dbReference>
<dbReference type="RefSeq" id="NP_001105225.1">
    <property type="nucleotide sequence ID" value="NM_001111755.1"/>
</dbReference>
<dbReference type="SMR" id="Q6WLH4"/>
<dbReference type="FunCoup" id="Q6WLH4">
    <property type="interactions" value="1225"/>
</dbReference>
<dbReference type="STRING" id="4577.Q6WLH4"/>
<dbReference type="EnsemblPlants" id="Zm00001eb361200_T001">
    <property type="protein sequence ID" value="Zm00001eb361200_P001"/>
    <property type="gene ID" value="Zm00001eb361200"/>
</dbReference>
<dbReference type="GeneID" id="542123"/>
<dbReference type="Gramene" id="Zm00001eb361200_T001">
    <property type="protein sequence ID" value="Zm00001eb361200_P001"/>
    <property type="gene ID" value="Zm00001eb361200"/>
</dbReference>
<dbReference type="KEGG" id="zma:542123"/>
<dbReference type="HOGENOM" id="CLU_047477_1_0_1"/>
<dbReference type="InParanoid" id="Q6WLH4"/>
<dbReference type="OMA" id="KWKNIIR"/>
<dbReference type="OrthoDB" id="608866at2759"/>
<dbReference type="Proteomes" id="UP000007305">
    <property type="component" value="Chromosome 8"/>
</dbReference>
<dbReference type="ExpressionAtlas" id="Q6WLH4">
    <property type="expression patterns" value="baseline and differential"/>
</dbReference>
<dbReference type="GO" id="GO:0000785">
    <property type="term" value="C:chromatin"/>
    <property type="evidence" value="ECO:0000250"/>
    <property type="project" value="UniProtKB"/>
</dbReference>
<dbReference type="GO" id="GO:0000781">
    <property type="term" value="C:chromosome, telomeric region"/>
    <property type="evidence" value="ECO:0007669"/>
    <property type="project" value="UniProtKB-SubCell"/>
</dbReference>
<dbReference type="GO" id="GO:0005730">
    <property type="term" value="C:nucleolus"/>
    <property type="evidence" value="ECO:0000250"/>
    <property type="project" value="UniProtKB"/>
</dbReference>
<dbReference type="GO" id="GO:0000786">
    <property type="term" value="C:nucleosome"/>
    <property type="evidence" value="ECO:0007669"/>
    <property type="project" value="InterPro"/>
</dbReference>
<dbReference type="GO" id="GO:0005634">
    <property type="term" value="C:nucleus"/>
    <property type="evidence" value="ECO:0000250"/>
    <property type="project" value="UniProtKB"/>
</dbReference>
<dbReference type="GO" id="GO:0003691">
    <property type="term" value="F:double-stranded telomeric DNA binding"/>
    <property type="evidence" value="ECO:0000250"/>
    <property type="project" value="UniProtKB"/>
</dbReference>
<dbReference type="GO" id="GO:0042803">
    <property type="term" value="F:protein homodimerization activity"/>
    <property type="evidence" value="ECO:0000250"/>
    <property type="project" value="UniProtKB"/>
</dbReference>
<dbReference type="GO" id="GO:0043047">
    <property type="term" value="F:single-stranded telomeric DNA binding"/>
    <property type="evidence" value="ECO:0000250"/>
    <property type="project" value="UniProtKB"/>
</dbReference>
<dbReference type="GO" id="GO:0006334">
    <property type="term" value="P:nucleosome assembly"/>
    <property type="evidence" value="ECO:0007669"/>
    <property type="project" value="InterPro"/>
</dbReference>
<dbReference type="CDD" id="cd11660">
    <property type="entry name" value="SANT_TRF"/>
    <property type="match status" value="1"/>
</dbReference>
<dbReference type="FunFam" id="1.10.10.10:FF:000620">
    <property type="entry name" value="Homeodomain-like/winged-helix DNA-binding family protein"/>
    <property type="match status" value="1"/>
</dbReference>
<dbReference type="FunFam" id="1.10.10.60:FF:000168">
    <property type="entry name" value="Telomere repeat-binding factor 1"/>
    <property type="match status" value="1"/>
</dbReference>
<dbReference type="Gene3D" id="1.10.10.60">
    <property type="entry name" value="Homeodomain-like"/>
    <property type="match status" value="1"/>
</dbReference>
<dbReference type="Gene3D" id="1.10.10.10">
    <property type="entry name" value="Winged helix-like DNA-binding domain superfamily/Winged helix DNA-binding domain"/>
    <property type="match status" value="1"/>
</dbReference>
<dbReference type="InterPro" id="IPR005818">
    <property type="entry name" value="Histone_H1/H5_H15"/>
</dbReference>
<dbReference type="InterPro" id="IPR009057">
    <property type="entry name" value="Homeodomain-like_sf"/>
</dbReference>
<dbReference type="InterPro" id="IPR017930">
    <property type="entry name" value="Myb_dom"/>
</dbReference>
<dbReference type="InterPro" id="IPR001005">
    <property type="entry name" value="SANT/Myb"/>
</dbReference>
<dbReference type="InterPro" id="IPR044597">
    <property type="entry name" value="SMH1-6"/>
</dbReference>
<dbReference type="InterPro" id="IPR036388">
    <property type="entry name" value="WH-like_DNA-bd_sf"/>
</dbReference>
<dbReference type="InterPro" id="IPR036390">
    <property type="entry name" value="WH_DNA-bd_sf"/>
</dbReference>
<dbReference type="PANTHER" id="PTHR46267">
    <property type="entry name" value="SINGLE MYB HISTONE 4"/>
    <property type="match status" value="1"/>
</dbReference>
<dbReference type="PANTHER" id="PTHR46267:SF15">
    <property type="entry name" value="WINGED HELIX-TURN-HELIX TRANSCRIPTION REPRESSOR DNA-BINDING PROTEIN-RELATED"/>
    <property type="match status" value="1"/>
</dbReference>
<dbReference type="Pfam" id="PF00538">
    <property type="entry name" value="Linker_histone"/>
    <property type="match status" value="1"/>
</dbReference>
<dbReference type="Pfam" id="PF00249">
    <property type="entry name" value="Myb_DNA-binding"/>
    <property type="match status" value="1"/>
</dbReference>
<dbReference type="SMART" id="SM00526">
    <property type="entry name" value="H15"/>
    <property type="match status" value="1"/>
</dbReference>
<dbReference type="SMART" id="SM00717">
    <property type="entry name" value="SANT"/>
    <property type="match status" value="1"/>
</dbReference>
<dbReference type="SUPFAM" id="SSF46689">
    <property type="entry name" value="Homeodomain-like"/>
    <property type="match status" value="1"/>
</dbReference>
<dbReference type="SUPFAM" id="SSF46785">
    <property type="entry name" value="Winged helix' DNA-binding domain"/>
    <property type="match status" value="1"/>
</dbReference>
<dbReference type="PROSITE" id="PS51504">
    <property type="entry name" value="H15"/>
    <property type="match status" value="1"/>
</dbReference>
<dbReference type="PROSITE" id="PS51294">
    <property type="entry name" value="HTH_MYB"/>
    <property type="match status" value="1"/>
</dbReference>
<reference key="1">
    <citation type="journal article" date="2003" name="Plant Physiol.">
        <title>The maize Single myb histone 1 gene, Smh1, belongs to a novel gene family and encodes a protein that binds telomere DNA repeats in vitro.</title>
        <authorList>
            <person name="Marian C.O."/>
            <person name="Bordoli S.J."/>
            <person name="Goltz M."/>
            <person name="Santarella R.A."/>
            <person name="Jackson L.P."/>
            <person name="Danilevskaya O."/>
            <person name="Beckstette M."/>
            <person name="Meeley R."/>
            <person name="Bass H.W."/>
        </authorList>
    </citation>
    <scope>NUCLEOTIDE SEQUENCE [MRNA]</scope>
    <scope>GENE FAMILY</scope>
    <scope>NOMENCLATURE</scope>
    <source>
        <tissue>Leaf</tissue>
    </source>
</reference>
<reference key="2">
    <citation type="journal article" date="2009" name="Plant Mol. Biol.">
        <title>Insights into corn genes derived from large-scale cDNA sequencing.</title>
        <authorList>
            <person name="Alexandrov N.N."/>
            <person name="Brover V.V."/>
            <person name="Freidin S."/>
            <person name="Troukhan M.E."/>
            <person name="Tatarinova T.V."/>
            <person name="Zhang H."/>
            <person name="Swaller T.J."/>
            <person name="Lu Y.-P."/>
            <person name="Bouck J."/>
            <person name="Flavell R.B."/>
            <person name="Feldmann K.A."/>
        </authorList>
    </citation>
    <scope>NUCLEOTIDE SEQUENCE [LARGE SCALE MRNA]</scope>
</reference>
<reference key="3">
    <citation type="journal article" date="2009" name="PLoS Genet.">
        <title>Sequencing, mapping, and analysis of 27,455 maize full-length cDNAs.</title>
        <authorList>
            <person name="Soderlund C."/>
            <person name="Descour A."/>
            <person name="Kudrna D."/>
            <person name="Bomhoff M."/>
            <person name="Boyd L."/>
            <person name="Currie J."/>
            <person name="Angelova A."/>
            <person name="Collura K."/>
            <person name="Wissotski M."/>
            <person name="Ashley E."/>
            <person name="Morrow D."/>
            <person name="Fernandes J."/>
            <person name="Walbot V."/>
            <person name="Yu Y."/>
        </authorList>
    </citation>
    <scope>NUCLEOTIDE SEQUENCE [LARGE SCALE MRNA]</scope>
    <source>
        <strain>cv. B73</strain>
    </source>
</reference>
<reference key="4">
    <citation type="journal article" date="2009" name="Science">
        <title>The B73 maize genome: complexity, diversity, and dynamics.</title>
        <authorList>
            <person name="Schnable P.S."/>
            <person name="Ware D."/>
            <person name="Fulton R.S."/>
            <person name="Stein J.C."/>
            <person name="Wei F."/>
            <person name="Pasternak S."/>
            <person name="Liang C."/>
            <person name="Zhang J."/>
            <person name="Fulton L."/>
            <person name="Graves T.A."/>
            <person name="Minx P."/>
            <person name="Reily A.D."/>
            <person name="Courtney L."/>
            <person name="Kruchowski S.S."/>
            <person name="Tomlinson C."/>
            <person name="Strong C."/>
            <person name="Delehaunty K."/>
            <person name="Fronick C."/>
            <person name="Courtney B."/>
            <person name="Rock S.M."/>
            <person name="Belter E."/>
            <person name="Du F."/>
            <person name="Kim K."/>
            <person name="Abbott R.M."/>
            <person name="Cotton M."/>
            <person name="Levy A."/>
            <person name="Marchetto P."/>
            <person name="Ochoa K."/>
            <person name="Jackson S.M."/>
            <person name="Gillam B."/>
            <person name="Chen W."/>
            <person name="Yan L."/>
            <person name="Higginbotham J."/>
            <person name="Cardenas M."/>
            <person name="Waligorski J."/>
            <person name="Applebaum E."/>
            <person name="Phelps L."/>
            <person name="Falcone J."/>
            <person name="Kanchi K."/>
            <person name="Thane T."/>
            <person name="Scimone A."/>
            <person name="Thane N."/>
            <person name="Henke J."/>
            <person name="Wang T."/>
            <person name="Ruppert J."/>
            <person name="Shah N."/>
            <person name="Rotter K."/>
            <person name="Hodges J."/>
            <person name="Ingenthron E."/>
            <person name="Cordes M."/>
            <person name="Kohlberg S."/>
            <person name="Sgro J."/>
            <person name="Delgado B."/>
            <person name="Mead K."/>
            <person name="Chinwalla A."/>
            <person name="Leonard S."/>
            <person name="Crouse K."/>
            <person name="Collura K."/>
            <person name="Kudrna D."/>
            <person name="Currie J."/>
            <person name="He R."/>
            <person name="Angelova A."/>
            <person name="Rajasekar S."/>
            <person name="Mueller T."/>
            <person name="Lomeli R."/>
            <person name="Scara G."/>
            <person name="Ko A."/>
            <person name="Delaney K."/>
            <person name="Wissotski M."/>
            <person name="Lopez G."/>
            <person name="Campos D."/>
            <person name="Braidotti M."/>
            <person name="Ashley E."/>
            <person name="Golser W."/>
            <person name="Kim H."/>
            <person name="Lee S."/>
            <person name="Lin J."/>
            <person name="Dujmic Z."/>
            <person name="Kim W."/>
            <person name="Talag J."/>
            <person name="Zuccolo A."/>
            <person name="Fan C."/>
            <person name="Sebastian A."/>
            <person name="Kramer M."/>
            <person name="Spiegel L."/>
            <person name="Nascimento L."/>
            <person name="Zutavern T."/>
            <person name="Miller B."/>
            <person name="Ambroise C."/>
            <person name="Muller S."/>
            <person name="Spooner W."/>
            <person name="Narechania A."/>
            <person name="Ren L."/>
            <person name="Wei S."/>
            <person name="Kumari S."/>
            <person name="Faga B."/>
            <person name="Levy M.J."/>
            <person name="McMahan L."/>
            <person name="Van Buren P."/>
            <person name="Vaughn M.W."/>
            <person name="Ying K."/>
            <person name="Yeh C.-T."/>
            <person name="Emrich S.J."/>
            <person name="Jia Y."/>
            <person name="Kalyanaraman A."/>
            <person name="Hsia A.-P."/>
            <person name="Barbazuk W.B."/>
            <person name="Baucom R.S."/>
            <person name="Brutnell T.P."/>
            <person name="Carpita N.C."/>
            <person name="Chaparro C."/>
            <person name="Chia J.-M."/>
            <person name="Deragon J.-M."/>
            <person name="Estill J.C."/>
            <person name="Fu Y."/>
            <person name="Jeddeloh J.A."/>
            <person name="Han Y."/>
            <person name="Lee H."/>
            <person name="Li P."/>
            <person name="Lisch D.R."/>
            <person name="Liu S."/>
            <person name="Liu Z."/>
            <person name="Nagel D.H."/>
            <person name="McCann M.C."/>
            <person name="SanMiguel P."/>
            <person name="Myers A.M."/>
            <person name="Nettleton D."/>
            <person name="Nguyen J."/>
            <person name="Penning B.W."/>
            <person name="Ponnala L."/>
            <person name="Schneider K.L."/>
            <person name="Schwartz D.C."/>
            <person name="Sharma A."/>
            <person name="Soderlund C."/>
            <person name="Springer N.M."/>
            <person name="Sun Q."/>
            <person name="Wang H."/>
            <person name="Waterman M."/>
            <person name="Westerman R."/>
            <person name="Wolfgruber T.K."/>
            <person name="Yang L."/>
            <person name="Yu Y."/>
            <person name="Zhang L."/>
            <person name="Zhou S."/>
            <person name="Zhu Q."/>
            <person name="Bennetzen J.L."/>
            <person name="Dawe R.K."/>
            <person name="Jiang J."/>
            <person name="Jiang N."/>
            <person name="Presting G.G."/>
            <person name="Wessler S.R."/>
            <person name="Aluru S."/>
            <person name="Martienssen R.A."/>
            <person name="Clifton S.W."/>
            <person name="McCombie W.R."/>
            <person name="Wing R.A."/>
            <person name="Wilson R.K."/>
        </authorList>
    </citation>
    <scope>NUCLEOTIDE SEQUENCE [LARGE SCALE GENOMIC DNA]</scope>
    <source>
        <strain>cv. B73</strain>
    </source>
</reference>
<name>SMH3_MAIZE</name>
<comment type="function">
    <text evidence="1">Binds preferentially double-stranded telomeric repeats, but may also bind to the single telomeric strand.</text>
</comment>
<comment type="subunit">
    <text evidence="1">Forms a homodimer and heterodimers.</text>
</comment>
<comment type="subcellular location">
    <subcellularLocation>
        <location evidence="3 4">Nucleus</location>
    </subcellularLocation>
    <subcellularLocation>
        <location evidence="4">Chromosome</location>
    </subcellularLocation>
    <subcellularLocation>
        <location evidence="1">Nucleus</location>
        <location evidence="1">Nucleolus</location>
    </subcellularLocation>
    <subcellularLocation>
        <location evidence="6">Chromosome</location>
        <location evidence="6">Telomere</location>
    </subcellularLocation>
    <text evidence="1">Localized to the nucleolus during interphase.</text>
</comment>
<comment type="domain">
    <text evidence="1">HTH myb-type domain confers double-stranded telomeric DNA-binding while the H15 domain is involved in non-specific DNA-protein interaction and multimerization.</text>
</comment>
<comment type="similarity">
    <text evidence="4">Belongs to the histone H1/H5 family. SMH subfamily.</text>
</comment>
<sequence length="285" mass="31347">MGAPKQKWTSEEEDALRRGVRKHGAGKWRTIQKDPQFSPILSSRSNIDLKDKWRNLSFSASGLGSSKVRVPKITGSSSSPSSSSQALLLPAANNVTEAMLPADADKKPRDGKTPPKYGAMIMEALSELNQPNGSDIDAIFDFIKQRHVVQSTFRRFLPSKLRRLADSNKIEKVDNFYRLPDSFATRTPAQIKVSDPKQKDPSKASKTIGLFAASSPALEAAMAAAVKVTDAEAKAHDAHDQMMEAERMLKMAEDTESILTIAAEIYDRCSRGEITTLVPVAQREF</sequence>
<accession>Q6WLH4</accession>